<feature type="chain" id="PRO_1000122270" description="Large ribosomal subunit protein bL20">
    <location>
        <begin position="1"/>
        <end position="118"/>
    </location>
</feature>
<keyword id="KW-0687">Ribonucleoprotein</keyword>
<keyword id="KW-0689">Ribosomal protein</keyword>
<keyword id="KW-0694">RNA-binding</keyword>
<keyword id="KW-0699">rRNA-binding</keyword>
<evidence type="ECO:0000255" key="1">
    <source>
        <dbReference type="HAMAP-Rule" id="MF_00382"/>
    </source>
</evidence>
<evidence type="ECO:0000305" key="2"/>
<organism>
    <name type="scientific">Bacillus cereus (strain AH820)</name>
    <dbReference type="NCBI Taxonomy" id="405535"/>
    <lineage>
        <taxon>Bacteria</taxon>
        <taxon>Bacillati</taxon>
        <taxon>Bacillota</taxon>
        <taxon>Bacilli</taxon>
        <taxon>Bacillales</taxon>
        <taxon>Bacillaceae</taxon>
        <taxon>Bacillus</taxon>
        <taxon>Bacillus cereus group</taxon>
    </lineage>
</organism>
<accession>B7JR80</accession>
<protein>
    <recommendedName>
        <fullName evidence="1">Large ribosomal subunit protein bL20</fullName>
    </recommendedName>
    <alternativeName>
        <fullName evidence="2">50S ribosomal protein L20</fullName>
    </alternativeName>
</protein>
<name>RL20_BACC0</name>
<reference key="1">
    <citation type="submission" date="2008-10" db="EMBL/GenBank/DDBJ databases">
        <title>Genome sequence of Bacillus cereus AH820.</title>
        <authorList>
            <person name="Dodson R.J."/>
            <person name="Durkin A.S."/>
            <person name="Rosovitz M.J."/>
            <person name="Rasko D.A."/>
            <person name="Hoffmaster A."/>
            <person name="Ravel J."/>
            <person name="Sutton G."/>
        </authorList>
    </citation>
    <scope>NUCLEOTIDE SEQUENCE [LARGE SCALE GENOMIC DNA]</scope>
    <source>
        <strain>AH820</strain>
    </source>
</reference>
<proteinExistence type="inferred from homology"/>
<comment type="function">
    <text evidence="1">Binds directly to 23S ribosomal RNA and is necessary for the in vitro assembly process of the 50S ribosomal subunit. It is not involved in the protein synthesizing functions of that subunit.</text>
</comment>
<comment type="similarity">
    <text evidence="1">Belongs to the bacterial ribosomal protein bL20 family.</text>
</comment>
<sequence length="118" mass="13612">MPRVKGGTVTRQRRKKVIKLAKGYYGSKNTLFKVANQQVMKSLMYAFRDRRQKKRDFRKLWITRINAAARMNGLSYSRLMHGLKNAGIEVNRKMLADLAVHDEKAFAELATVAKNNIN</sequence>
<gene>
    <name evidence="1" type="primary">rplT</name>
    <name type="ordered locus">BCAH820_4688</name>
</gene>
<dbReference type="EMBL" id="CP001283">
    <property type="protein sequence ID" value="ACK88338.1"/>
    <property type="molecule type" value="Genomic_DNA"/>
</dbReference>
<dbReference type="RefSeq" id="WP_001138362.1">
    <property type="nucleotide sequence ID" value="NC_011773.1"/>
</dbReference>
<dbReference type="SMR" id="B7JR80"/>
<dbReference type="GeneID" id="93006537"/>
<dbReference type="KEGG" id="bcu:BCAH820_4688"/>
<dbReference type="HOGENOM" id="CLU_123265_0_1_9"/>
<dbReference type="Proteomes" id="UP000001363">
    <property type="component" value="Chromosome"/>
</dbReference>
<dbReference type="GO" id="GO:1990904">
    <property type="term" value="C:ribonucleoprotein complex"/>
    <property type="evidence" value="ECO:0007669"/>
    <property type="project" value="UniProtKB-KW"/>
</dbReference>
<dbReference type="GO" id="GO:0005840">
    <property type="term" value="C:ribosome"/>
    <property type="evidence" value="ECO:0007669"/>
    <property type="project" value="UniProtKB-KW"/>
</dbReference>
<dbReference type="GO" id="GO:0019843">
    <property type="term" value="F:rRNA binding"/>
    <property type="evidence" value="ECO:0007669"/>
    <property type="project" value="UniProtKB-UniRule"/>
</dbReference>
<dbReference type="GO" id="GO:0003735">
    <property type="term" value="F:structural constituent of ribosome"/>
    <property type="evidence" value="ECO:0007669"/>
    <property type="project" value="InterPro"/>
</dbReference>
<dbReference type="GO" id="GO:0000027">
    <property type="term" value="P:ribosomal large subunit assembly"/>
    <property type="evidence" value="ECO:0007669"/>
    <property type="project" value="UniProtKB-UniRule"/>
</dbReference>
<dbReference type="GO" id="GO:0006412">
    <property type="term" value="P:translation"/>
    <property type="evidence" value="ECO:0007669"/>
    <property type="project" value="InterPro"/>
</dbReference>
<dbReference type="CDD" id="cd07026">
    <property type="entry name" value="Ribosomal_L20"/>
    <property type="match status" value="1"/>
</dbReference>
<dbReference type="FunFam" id="1.10.1900.20:FF:000001">
    <property type="entry name" value="50S ribosomal protein L20"/>
    <property type="match status" value="1"/>
</dbReference>
<dbReference type="Gene3D" id="6.10.160.10">
    <property type="match status" value="1"/>
</dbReference>
<dbReference type="Gene3D" id="1.10.1900.20">
    <property type="entry name" value="Ribosomal protein L20"/>
    <property type="match status" value="1"/>
</dbReference>
<dbReference type="HAMAP" id="MF_00382">
    <property type="entry name" value="Ribosomal_bL20"/>
    <property type="match status" value="1"/>
</dbReference>
<dbReference type="InterPro" id="IPR005813">
    <property type="entry name" value="Ribosomal_bL20"/>
</dbReference>
<dbReference type="InterPro" id="IPR049946">
    <property type="entry name" value="RIBOSOMAL_L20_CS"/>
</dbReference>
<dbReference type="InterPro" id="IPR035566">
    <property type="entry name" value="Ribosomal_protein_bL20_C"/>
</dbReference>
<dbReference type="NCBIfam" id="TIGR01032">
    <property type="entry name" value="rplT_bact"/>
    <property type="match status" value="1"/>
</dbReference>
<dbReference type="PANTHER" id="PTHR10986">
    <property type="entry name" value="39S RIBOSOMAL PROTEIN L20"/>
    <property type="match status" value="1"/>
</dbReference>
<dbReference type="Pfam" id="PF00453">
    <property type="entry name" value="Ribosomal_L20"/>
    <property type="match status" value="1"/>
</dbReference>
<dbReference type="PRINTS" id="PR00062">
    <property type="entry name" value="RIBOSOMALL20"/>
</dbReference>
<dbReference type="SUPFAM" id="SSF74731">
    <property type="entry name" value="Ribosomal protein L20"/>
    <property type="match status" value="1"/>
</dbReference>
<dbReference type="PROSITE" id="PS00937">
    <property type="entry name" value="RIBOSOMAL_L20"/>
    <property type="match status" value="1"/>
</dbReference>